<comment type="function">
    <text evidence="1">Acts as a radical domain for damaged PFL and possibly other radical proteins.</text>
</comment>
<gene>
    <name evidence="1" type="primary">grcA</name>
    <name type="ordered locus">YPN_1193</name>
    <name type="ORF">YP516_1304</name>
</gene>
<evidence type="ECO:0000255" key="1">
    <source>
        <dbReference type="HAMAP-Rule" id="MF_00806"/>
    </source>
</evidence>
<name>GRCA_YERPN</name>
<protein>
    <recommendedName>
        <fullName evidence="1">Autonomous glycyl radical cofactor</fullName>
    </recommendedName>
</protein>
<keyword id="KW-0556">Organic radical</keyword>
<feature type="chain" id="PRO_1000083743" description="Autonomous glycyl radical cofactor">
    <location>
        <begin position="1"/>
        <end position="127"/>
    </location>
</feature>
<feature type="domain" description="Glycine radical" evidence="1">
    <location>
        <begin position="5"/>
        <end position="127"/>
    </location>
</feature>
<feature type="modified residue" description="Glycine radical" evidence="1">
    <location>
        <position position="102"/>
    </location>
</feature>
<proteinExistence type="inferred from homology"/>
<dbReference type="EMBL" id="CP000305">
    <property type="protein sequence ID" value="ABG17523.1"/>
    <property type="molecule type" value="Genomic_DNA"/>
</dbReference>
<dbReference type="EMBL" id="ACNQ01000008">
    <property type="protein sequence ID" value="EEO77627.1"/>
    <property type="molecule type" value="Genomic_DNA"/>
</dbReference>
<dbReference type="RefSeq" id="WP_002209664.1">
    <property type="nucleotide sequence ID" value="NZ_ACNQ01000008.1"/>
</dbReference>
<dbReference type="SMR" id="Q1CKF7"/>
<dbReference type="GeneID" id="57975986"/>
<dbReference type="KEGG" id="ypn:YPN_1193"/>
<dbReference type="HOGENOM" id="CLU_133780_0_0_6"/>
<dbReference type="Proteomes" id="UP000008936">
    <property type="component" value="Chromosome"/>
</dbReference>
<dbReference type="GO" id="GO:0005829">
    <property type="term" value="C:cytosol"/>
    <property type="evidence" value="ECO:0007669"/>
    <property type="project" value="TreeGrafter"/>
</dbReference>
<dbReference type="GO" id="GO:0008861">
    <property type="term" value="F:formate C-acetyltransferase activity"/>
    <property type="evidence" value="ECO:0007669"/>
    <property type="project" value="TreeGrafter"/>
</dbReference>
<dbReference type="FunFam" id="3.20.70.20:FF:000002">
    <property type="entry name" value="Autonomous glycyl radical cofactor"/>
    <property type="match status" value="1"/>
</dbReference>
<dbReference type="Gene3D" id="3.20.70.20">
    <property type="match status" value="1"/>
</dbReference>
<dbReference type="HAMAP" id="MF_00806">
    <property type="entry name" value="GrcA"/>
    <property type="match status" value="1"/>
</dbReference>
<dbReference type="InterPro" id="IPR050244">
    <property type="entry name" value="Auton_GlycylRad_Cofactor"/>
</dbReference>
<dbReference type="InterPro" id="IPR019777">
    <property type="entry name" value="Form_AcTrfase_GR_CS"/>
</dbReference>
<dbReference type="InterPro" id="IPR001150">
    <property type="entry name" value="Gly_radical"/>
</dbReference>
<dbReference type="InterPro" id="IPR011140">
    <property type="entry name" value="Glycyl_radical_cofactor_GrcA"/>
</dbReference>
<dbReference type="NCBIfam" id="TIGR04365">
    <property type="entry name" value="spare_glycyl"/>
    <property type="match status" value="1"/>
</dbReference>
<dbReference type="PANTHER" id="PTHR30191">
    <property type="entry name" value="FORMATE ACETYLTRANSFERASE"/>
    <property type="match status" value="1"/>
</dbReference>
<dbReference type="PANTHER" id="PTHR30191:SF0">
    <property type="entry name" value="FORMATE ACETYLTRANSFERASE 1"/>
    <property type="match status" value="1"/>
</dbReference>
<dbReference type="Pfam" id="PF01228">
    <property type="entry name" value="Gly_radical"/>
    <property type="match status" value="1"/>
</dbReference>
<dbReference type="PIRSF" id="PIRSF000378">
    <property type="entry name" value="Gly_radicl_yfiD"/>
    <property type="match status" value="1"/>
</dbReference>
<dbReference type="SUPFAM" id="SSF51998">
    <property type="entry name" value="PFL-like glycyl radical enzymes"/>
    <property type="match status" value="1"/>
</dbReference>
<dbReference type="PROSITE" id="PS00850">
    <property type="entry name" value="GLY_RADICAL_1"/>
    <property type="match status" value="1"/>
</dbReference>
<dbReference type="PROSITE" id="PS51149">
    <property type="entry name" value="GLY_RADICAL_2"/>
    <property type="match status" value="1"/>
</dbReference>
<organism>
    <name type="scientific">Yersinia pestis bv. Antiqua (strain Nepal516)</name>
    <dbReference type="NCBI Taxonomy" id="377628"/>
    <lineage>
        <taxon>Bacteria</taxon>
        <taxon>Pseudomonadati</taxon>
        <taxon>Pseudomonadota</taxon>
        <taxon>Gammaproteobacteria</taxon>
        <taxon>Enterobacterales</taxon>
        <taxon>Yersiniaceae</taxon>
        <taxon>Yersinia</taxon>
    </lineage>
</organism>
<accession>Q1CKF7</accession>
<accession>C4GRD6</accession>
<sequence>MITGIQITKANNEALLNSFWLLDDEKAELRCVCAKSGYAEDQIVPTSELGEIEYREVPLEVQPTVRVEGGQHLNVNVLSRDTLEDAVKNPEKYPQLTIRVSGYAVRFNSLTPEQQRDVITRTFTESL</sequence>
<reference key="1">
    <citation type="journal article" date="2006" name="J. Bacteriol.">
        <title>Complete genome sequence of Yersinia pestis strains Antiqua and Nepal516: evidence of gene reduction in an emerging pathogen.</title>
        <authorList>
            <person name="Chain P.S.G."/>
            <person name="Hu P."/>
            <person name="Malfatti S.A."/>
            <person name="Radnedge L."/>
            <person name="Larimer F."/>
            <person name="Vergez L.M."/>
            <person name="Worsham P."/>
            <person name="Chu M.C."/>
            <person name="Andersen G.L."/>
        </authorList>
    </citation>
    <scope>NUCLEOTIDE SEQUENCE [LARGE SCALE GENOMIC DNA]</scope>
    <source>
        <strain>Nepal516</strain>
    </source>
</reference>
<reference key="2">
    <citation type="submission" date="2009-04" db="EMBL/GenBank/DDBJ databases">
        <title>Yersinia pestis Nepal516A whole genome shotgun sequencing project.</title>
        <authorList>
            <person name="Plunkett G. III"/>
            <person name="Anderson B.D."/>
            <person name="Baumler D.J."/>
            <person name="Burland V."/>
            <person name="Cabot E.L."/>
            <person name="Glasner J.D."/>
            <person name="Mau B."/>
            <person name="Neeno-Eckwall E."/>
            <person name="Perna N.T."/>
            <person name="Munk A.C."/>
            <person name="Tapia R."/>
            <person name="Green L.D."/>
            <person name="Rogers Y.C."/>
            <person name="Detter J.C."/>
            <person name="Bruce D.C."/>
            <person name="Brettin T.S."/>
        </authorList>
    </citation>
    <scope>NUCLEOTIDE SEQUENCE [LARGE SCALE GENOMIC DNA]</scope>
    <source>
        <strain>Nepal516</strain>
    </source>
</reference>